<protein>
    <recommendedName>
        <fullName>V-type ATP synthase beta chain</fullName>
    </recommendedName>
    <alternativeName>
        <fullName>V-ATPase subunit B</fullName>
    </alternativeName>
</protein>
<evidence type="ECO:0000305" key="1"/>
<sequence length="438" mass="48286">MQTIYTKITDIKGNLITVEAEGARLGELATITRSDGRSSYASVLRFDLKKVTLQVFGGTSGLSTGDHVTFLGRPMEVTFGSSLLGRRLNGIGKPIDNEGECFGEPIEIATPTFNPVCRIVPRSMVRTNIPMIDVFNCLVKSQKIPIFSSSGEHHNALLMRIAAQTDADIVVIGGMGLTFVDYSFFVEESKKLGFADKCVMFIHKAVDAPVECVLVPDMALACAEKFAVEEKKNVLVLLTDMTAFADALKEISITMDQIPANRGYPGSLYSDLALRYEKAVEIADGGSITLITVTTMPSDDITHPVPDNTGYITEGQFYLRNNRIDPFGSLSRLKQLVIGKVTREDHGDLANALIRLYADSRKATERMAMGFKLSNWDKKLLAFSELFETRLMSLEVNIPLEEALDIGWKILAQSFTSEEVGIKAQLINKYWPKACLSK</sequence>
<reference key="1">
    <citation type="journal article" date="1999" name="Nat. Genet.">
        <title>Comparative genomes of Chlamydia pneumoniae and C. trachomatis.</title>
        <authorList>
            <person name="Kalman S."/>
            <person name="Mitchell W.P."/>
            <person name="Marathe R."/>
            <person name="Lammel C.J."/>
            <person name="Fan J."/>
            <person name="Hyman R.W."/>
            <person name="Olinger L."/>
            <person name="Grimwood J."/>
            <person name="Davis R.W."/>
            <person name="Stephens R.S."/>
        </authorList>
    </citation>
    <scope>NUCLEOTIDE SEQUENCE [LARGE SCALE GENOMIC DNA]</scope>
    <source>
        <strain>CWL029</strain>
    </source>
</reference>
<reference key="2">
    <citation type="journal article" date="2000" name="Nucleic Acids Res.">
        <title>Genome sequences of Chlamydia trachomatis MoPn and Chlamydia pneumoniae AR39.</title>
        <authorList>
            <person name="Read T.D."/>
            <person name="Brunham R.C."/>
            <person name="Shen C."/>
            <person name="Gill S.R."/>
            <person name="Heidelberg J.F."/>
            <person name="White O."/>
            <person name="Hickey E.K."/>
            <person name="Peterson J.D."/>
            <person name="Utterback T.R."/>
            <person name="Berry K.J."/>
            <person name="Bass S."/>
            <person name="Linher K.D."/>
            <person name="Weidman J.F."/>
            <person name="Khouri H.M."/>
            <person name="Craven B."/>
            <person name="Bowman C."/>
            <person name="Dodson R.J."/>
            <person name="Gwinn M.L."/>
            <person name="Nelson W.C."/>
            <person name="DeBoy R.T."/>
            <person name="Kolonay J.F."/>
            <person name="McClarty G."/>
            <person name="Salzberg S.L."/>
            <person name="Eisen J.A."/>
            <person name="Fraser C.M."/>
        </authorList>
    </citation>
    <scope>NUCLEOTIDE SEQUENCE [LARGE SCALE GENOMIC DNA]</scope>
    <source>
        <strain>AR39</strain>
    </source>
</reference>
<reference key="3">
    <citation type="journal article" date="2000" name="Nucleic Acids Res.">
        <title>Comparison of whole genome sequences of Chlamydia pneumoniae J138 from Japan and CWL029 from USA.</title>
        <authorList>
            <person name="Shirai M."/>
            <person name="Hirakawa H."/>
            <person name="Kimoto M."/>
            <person name="Tabuchi M."/>
            <person name="Kishi F."/>
            <person name="Ouchi K."/>
            <person name="Shiba T."/>
            <person name="Ishii K."/>
            <person name="Hattori M."/>
            <person name="Kuhara S."/>
            <person name="Nakazawa T."/>
        </authorList>
    </citation>
    <scope>NUCLEOTIDE SEQUENCE [LARGE SCALE GENOMIC DNA]</scope>
    <source>
        <strain>J138</strain>
    </source>
</reference>
<reference key="4">
    <citation type="submission" date="2002-05" db="EMBL/GenBank/DDBJ databases">
        <title>The genome sequence of Chlamydia pneumoniae TW183 and comparison with other Chlamydia strains based on whole genome sequence analysis.</title>
        <authorList>
            <person name="Geng M.M."/>
            <person name="Schuhmacher A."/>
            <person name="Muehldorfer I."/>
            <person name="Bensch K.W."/>
            <person name="Schaefer K.P."/>
            <person name="Schneider S."/>
            <person name="Pohl T."/>
            <person name="Essig A."/>
            <person name="Marre R."/>
            <person name="Melchers K."/>
        </authorList>
    </citation>
    <scope>NUCLEOTIDE SEQUENCE [LARGE SCALE GENOMIC DNA]</scope>
    <source>
        <strain>TW-183</strain>
    </source>
</reference>
<proteinExistence type="inferred from homology"/>
<feature type="chain" id="PRO_0000144675" description="V-type ATP synthase beta chain">
    <location>
        <begin position="1"/>
        <end position="438"/>
    </location>
</feature>
<dbReference type="EMBL" id="AE001363">
    <property type="protein sequence ID" value="AAD18242.1"/>
    <property type="molecule type" value="Genomic_DNA"/>
</dbReference>
<dbReference type="EMBL" id="AE002161">
    <property type="protein sequence ID" value="AAF38494.1"/>
    <property type="molecule type" value="Genomic_DNA"/>
</dbReference>
<dbReference type="EMBL" id="BA000008">
    <property type="protein sequence ID" value="BAA98299.1"/>
    <property type="molecule type" value="Genomic_DNA"/>
</dbReference>
<dbReference type="EMBL" id="AE009440">
    <property type="protein sequence ID" value="AAP98022.1"/>
    <property type="molecule type" value="Genomic_DNA"/>
</dbReference>
<dbReference type="PIR" id="A86502">
    <property type="entry name" value="A86502"/>
</dbReference>
<dbReference type="PIR" id="C72121">
    <property type="entry name" value="C72121"/>
</dbReference>
<dbReference type="RefSeq" id="NP_224297.1">
    <property type="nucleotide sequence ID" value="NC_000922.1"/>
</dbReference>
<dbReference type="RefSeq" id="WP_010882739.1">
    <property type="nucleotide sequence ID" value="NZ_LN847257.1"/>
</dbReference>
<dbReference type="SMR" id="Q9Z992"/>
<dbReference type="STRING" id="406984.CPK_ORF00599"/>
<dbReference type="GeneID" id="45050134"/>
<dbReference type="KEGG" id="cpa:CP_0685"/>
<dbReference type="KEGG" id="cpj:atpB"/>
<dbReference type="KEGG" id="cpn:CPn_0089"/>
<dbReference type="KEGG" id="cpt:CpB0089"/>
<dbReference type="PATRIC" id="fig|115713.3.peg.102"/>
<dbReference type="eggNOG" id="COG1156">
    <property type="taxonomic scope" value="Bacteria"/>
</dbReference>
<dbReference type="HOGENOM" id="CLU_022916_2_0_0"/>
<dbReference type="OrthoDB" id="9802718at2"/>
<dbReference type="Proteomes" id="UP000000583">
    <property type="component" value="Chromosome"/>
</dbReference>
<dbReference type="Proteomes" id="UP000000801">
    <property type="component" value="Chromosome"/>
</dbReference>
<dbReference type="GO" id="GO:0005524">
    <property type="term" value="F:ATP binding"/>
    <property type="evidence" value="ECO:0007669"/>
    <property type="project" value="UniProtKB-UniRule"/>
</dbReference>
<dbReference type="GO" id="GO:0046933">
    <property type="term" value="F:proton-transporting ATP synthase activity, rotational mechanism"/>
    <property type="evidence" value="ECO:0007669"/>
    <property type="project" value="UniProtKB-UniRule"/>
</dbReference>
<dbReference type="GO" id="GO:0042777">
    <property type="term" value="P:proton motive force-driven plasma membrane ATP synthesis"/>
    <property type="evidence" value="ECO:0007669"/>
    <property type="project" value="UniProtKB-UniRule"/>
</dbReference>
<dbReference type="CDD" id="cd18118">
    <property type="entry name" value="ATP-synt_V_A-type_beta_N"/>
    <property type="match status" value="1"/>
</dbReference>
<dbReference type="CDD" id="cd01135">
    <property type="entry name" value="V_A-ATPase_B"/>
    <property type="match status" value="1"/>
</dbReference>
<dbReference type="Gene3D" id="3.40.50.12240">
    <property type="match status" value="1"/>
</dbReference>
<dbReference type="HAMAP" id="MF_00310">
    <property type="entry name" value="ATP_synth_B_arch"/>
    <property type="match status" value="1"/>
</dbReference>
<dbReference type="InterPro" id="IPR055190">
    <property type="entry name" value="ATP-synt_VA_C"/>
</dbReference>
<dbReference type="InterPro" id="IPR004100">
    <property type="entry name" value="ATPase_F1/V1/A1_a/bsu_N"/>
</dbReference>
<dbReference type="InterPro" id="IPR000194">
    <property type="entry name" value="ATPase_F1/V1/A1_a/bsu_nucl-bd"/>
</dbReference>
<dbReference type="InterPro" id="IPR027417">
    <property type="entry name" value="P-loop_NTPase"/>
</dbReference>
<dbReference type="InterPro" id="IPR022879">
    <property type="entry name" value="V-ATPase_su_B/beta"/>
</dbReference>
<dbReference type="NCBIfam" id="NF002555">
    <property type="entry name" value="PRK02118.1"/>
    <property type="match status" value="1"/>
</dbReference>
<dbReference type="NCBIfam" id="NF003235">
    <property type="entry name" value="PRK04196.1"/>
    <property type="match status" value="1"/>
</dbReference>
<dbReference type="PANTHER" id="PTHR43389">
    <property type="entry name" value="V-TYPE PROTON ATPASE SUBUNIT B"/>
    <property type="match status" value="1"/>
</dbReference>
<dbReference type="PANTHER" id="PTHR43389:SF4">
    <property type="entry name" value="V-TYPE PROTON ATPASE SUBUNIT B"/>
    <property type="match status" value="1"/>
</dbReference>
<dbReference type="Pfam" id="PF00006">
    <property type="entry name" value="ATP-synt_ab"/>
    <property type="match status" value="1"/>
</dbReference>
<dbReference type="Pfam" id="PF02874">
    <property type="entry name" value="ATP-synt_ab_N"/>
    <property type="match status" value="1"/>
</dbReference>
<dbReference type="Pfam" id="PF22919">
    <property type="entry name" value="ATP-synt_VA_C"/>
    <property type="match status" value="1"/>
</dbReference>
<dbReference type="SUPFAM" id="SSF52540">
    <property type="entry name" value="P-loop containing nucleoside triphosphate hydrolases"/>
    <property type="match status" value="1"/>
</dbReference>
<gene>
    <name type="primary">atpB</name>
    <name type="ordered locus">CPn_0089</name>
    <name type="ordered locus">CP_0685</name>
    <name type="ordered locus">CpB0089</name>
</gene>
<keyword id="KW-0066">ATP synthesis</keyword>
<keyword id="KW-0375">Hydrogen ion transport</keyword>
<keyword id="KW-0406">Ion transport</keyword>
<keyword id="KW-0813">Transport</keyword>
<organism>
    <name type="scientific">Chlamydia pneumoniae</name>
    <name type="common">Chlamydophila pneumoniae</name>
    <dbReference type="NCBI Taxonomy" id="83558"/>
    <lineage>
        <taxon>Bacteria</taxon>
        <taxon>Pseudomonadati</taxon>
        <taxon>Chlamydiota</taxon>
        <taxon>Chlamydiia</taxon>
        <taxon>Chlamydiales</taxon>
        <taxon>Chlamydiaceae</taxon>
        <taxon>Chlamydia/Chlamydophila group</taxon>
        <taxon>Chlamydia</taxon>
    </lineage>
</organism>
<name>VATB_CHLPN</name>
<comment type="function">
    <text>Produces ATP from ADP in the presence of a proton gradient across the membrane. The V-type beta chain is a regulatory subunit.</text>
</comment>
<comment type="similarity">
    <text evidence="1">Belongs to the ATPase alpha/beta chains family.</text>
</comment>
<accession>Q9Z992</accession>